<protein>
    <recommendedName>
        <fullName>Alcohol dehydrogenase 1</fullName>
        <ecNumber>1.1.1.1</ecNumber>
    </recommendedName>
</protein>
<feature type="chain" id="PRO_0000160676" description="Alcohol dehydrogenase 1">
    <location>
        <begin position="1"/>
        <end position="375"/>
    </location>
</feature>
<feature type="binding site" evidence="1">
    <location>
        <position position="46"/>
    </location>
    <ligand>
        <name>Zn(2+)</name>
        <dbReference type="ChEBI" id="CHEBI:29105"/>
        <label>1</label>
        <note>catalytic</note>
    </ligand>
</feature>
<feature type="binding site" evidence="1">
    <location>
        <position position="67"/>
    </location>
    <ligand>
        <name>Zn(2+)</name>
        <dbReference type="ChEBI" id="CHEBI:29105"/>
        <label>1</label>
        <note>catalytic</note>
    </ligand>
</feature>
<feature type="binding site" evidence="1">
    <location>
        <position position="97"/>
    </location>
    <ligand>
        <name>Zn(2+)</name>
        <dbReference type="ChEBI" id="CHEBI:29105"/>
        <label>2</label>
    </ligand>
</feature>
<feature type="binding site" evidence="1">
    <location>
        <position position="100"/>
    </location>
    <ligand>
        <name>Zn(2+)</name>
        <dbReference type="ChEBI" id="CHEBI:29105"/>
        <label>2</label>
    </ligand>
</feature>
<feature type="binding site" evidence="1">
    <location>
        <position position="103"/>
    </location>
    <ligand>
        <name>Zn(2+)</name>
        <dbReference type="ChEBI" id="CHEBI:29105"/>
        <label>2</label>
    </ligand>
</feature>
<feature type="binding site" evidence="1">
    <location>
        <position position="111"/>
    </location>
    <ligand>
        <name>Zn(2+)</name>
        <dbReference type="ChEBI" id="CHEBI:29105"/>
        <label>2</label>
    </ligand>
</feature>
<feature type="binding site" evidence="1">
    <location>
        <position position="174"/>
    </location>
    <ligand>
        <name>Zn(2+)</name>
        <dbReference type="ChEBI" id="CHEBI:29105"/>
        <label>1</label>
        <note>catalytic</note>
    </ligand>
</feature>
<feature type="binding site" evidence="1">
    <location>
        <begin position="199"/>
        <end position="204"/>
    </location>
    <ligand>
        <name>NAD(+)</name>
        <dbReference type="ChEBI" id="CHEBI:57540"/>
    </ligand>
</feature>
<feature type="binding site" evidence="1">
    <location>
        <position position="223"/>
    </location>
    <ligand>
        <name>NAD(+)</name>
        <dbReference type="ChEBI" id="CHEBI:57540"/>
    </ligand>
</feature>
<feature type="binding site" evidence="1">
    <location>
        <position position="228"/>
    </location>
    <ligand>
        <name>NAD(+)</name>
        <dbReference type="ChEBI" id="CHEBI:57540"/>
    </ligand>
</feature>
<feature type="binding site" evidence="1">
    <location>
        <begin position="293"/>
        <end position="295"/>
    </location>
    <ligand>
        <name>NAD(+)</name>
        <dbReference type="ChEBI" id="CHEBI:57540"/>
    </ligand>
</feature>
<feature type="binding site" evidence="1">
    <location>
        <position position="370"/>
    </location>
    <ligand>
        <name>NAD(+)</name>
        <dbReference type="ChEBI" id="CHEBI:57540"/>
    </ligand>
</feature>
<feature type="modified residue" description="N-acetylserine" evidence="2">
    <location>
        <position position="1"/>
    </location>
</feature>
<proteinExistence type="evidence at protein level"/>
<accession>P80512</accession>
<keyword id="KW-0007">Acetylation</keyword>
<keyword id="KW-0963">Cytoplasm</keyword>
<keyword id="KW-0903">Direct protein sequencing</keyword>
<keyword id="KW-0479">Metal-binding</keyword>
<keyword id="KW-0520">NAD</keyword>
<keyword id="KW-0560">Oxidoreductase</keyword>
<keyword id="KW-1185">Reference proteome</keyword>
<keyword id="KW-0862">Zinc</keyword>
<dbReference type="EC" id="1.1.1.1"/>
<dbReference type="PIR" id="S62640">
    <property type="entry name" value="S62640"/>
</dbReference>
<dbReference type="SMR" id="P80512"/>
<dbReference type="iPTMnet" id="P80512"/>
<dbReference type="Proteomes" id="UP000694559">
    <property type="component" value="Unplaced"/>
</dbReference>
<dbReference type="GO" id="GO:0005829">
    <property type="term" value="C:cytosol"/>
    <property type="evidence" value="ECO:0007669"/>
    <property type="project" value="TreeGrafter"/>
</dbReference>
<dbReference type="GO" id="GO:0004745">
    <property type="term" value="F:all-trans-retinol dehydrogenase (NAD+) activity"/>
    <property type="evidence" value="ECO:0007669"/>
    <property type="project" value="TreeGrafter"/>
</dbReference>
<dbReference type="GO" id="GO:0008270">
    <property type="term" value="F:zinc ion binding"/>
    <property type="evidence" value="ECO:0007669"/>
    <property type="project" value="InterPro"/>
</dbReference>
<dbReference type="GO" id="GO:0042573">
    <property type="term" value="P:retinoic acid metabolic process"/>
    <property type="evidence" value="ECO:0007669"/>
    <property type="project" value="TreeGrafter"/>
</dbReference>
<dbReference type="GO" id="GO:0042572">
    <property type="term" value="P:retinol metabolic process"/>
    <property type="evidence" value="ECO:0007669"/>
    <property type="project" value="TreeGrafter"/>
</dbReference>
<dbReference type="CDD" id="cd08299">
    <property type="entry name" value="alcohol_DH_class_I_II_IV"/>
    <property type="match status" value="1"/>
</dbReference>
<dbReference type="FunFam" id="3.40.50.720:FF:001857">
    <property type="entry name" value="Alcohol dehydrogenase class 4 mu/sigma chain"/>
    <property type="match status" value="1"/>
</dbReference>
<dbReference type="FunFam" id="3.90.180.10:FF:000001">
    <property type="entry name" value="S-(hydroxymethyl)glutathione dehydrogenase"/>
    <property type="match status" value="1"/>
</dbReference>
<dbReference type="Gene3D" id="3.90.180.10">
    <property type="entry name" value="Medium-chain alcohol dehydrogenases, catalytic domain"/>
    <property type="match status" value="1"/>
</dbReference>
<dbReference type="Gene3D" id="3.40.50.720">
    <property type="entry name" value="NAD(P)-binding Rossmann-like Domain"/>
    <property type="match status" value="1"/>
</dbReference>
<dbReference type="InterPro" id="IPR013149">
    <property type="entry name" value="ADH-like_C"/>
</dbReference>
<dbReference type="InterPro" id="IPR013154">
    <property type="entry name" value="ADH-like_N"/>
</dbReference>
<dbReference type="InterPro" id="IPR002328">
    <property type="entry name" value="ADH_Zn_CS"/>
</dbReference>
<dbReference type="InterPro" id="IPR011032">
    <property type="entry name" value="GroES-like_sf"/>
</dbReference>
<dbReference type="InterPro" id="IPR036291">
    <property type="entry name" value="NAD(P)-bd_dom_sf"/>
</dbReference>
<dbReference type="InterPro" id="IPR020843">
    <property type="entry name" value="PKS_ER"/>
</dbReference>
<dbReference type="PANTHER" id="PTHR43880">
    <property type="entry name" value="ALCOHOL DEHYDROGENASE"/>
    <property type="match status" value="1"/>
</dbReference>
<dbReference type="PANTHER" id="PTHR43880:SF1">
    <property type="entry name" value="ALCOHOL DEHYDROGENASE 1A"/>
    <property type="match status" value="1"/>
</dbReference>
<dbReference type="Pfam" id="PF08240">
    <property type="entry name" value="ADH_N"/>
    <property type="match status" value="1"/>
</dbReference>
<dbReference type="Pfam" id="PF00107">
    <property type="entry name" value="ADH_zinc_N"/>
    <property type="match status" value="1"/>
</dbReference>
<dbReference type="SMART" id="SM00829">
    <property type="entry name" value="PKS_ER"/>
    <property type="match status" value="1"/>
</dbReference>
<dbReference type="SUPFAM" id="SSF50129">
    <property type="entry name" value="GroES-like"/>
    <property type="match status" value="2"/>
</dbReference>
<dbReference type="SUPFAM" id="SSF51735">
    <property type="entry name" value="NAD(P)-binding Rossmann-fold domains"/>
    <property type="match status" value="1"/>
</dbReference>
<dbReference type="PROSITE" id="PS00059">
    <property type="entry name" value="ADH_ZINC"/>
    <property type="match status" value="1"/>
</dbReference>
<name>ADH1_NAJNA</name>
<reference key="1">
    <citation type="journal article" date="1996" name="Eur. J. Biochem.">
        <title>Liver class-I alcohol dehydrogenase isozyme relationships and constant patterns in a variable basic structure. Distinctions from characterization of an ethanol dehydrogenase in cobra, Naja naja.</title>
        <authorList>
            <person name="Shafqat J."/>
            <person name="Hjelmqvist L."/>
            <person name="Joernvall H."/>
        </authorList>
    </citation>
    <scope>PROTEIN SEQUENCE</scope>
    <scope>ACETYLATION AT SER-1</scope>
    <source>
        <tissue>Liver</tissue>
    </source>
</reference>
<organism>
    <name type="scientific">Naja naja</name>
    <name type="common">Indian cobra</name>
    <dbReference type="NCBI Taxonomy" id="35670"/>
    <lineage>
        <taxon>Eukaryota</taxon>
        <taxon>Metazoa</taxon>
        <taxon>Chordata</taxon>
        <taxon>Craniata</taxon>
        <taxon>Vertebrata</taxon>
        <taxon>Euteleostomi</taxon>
        <taxon>Lepidosauria</taxon>
        <taxon>Squamata</taxon>
        <taxon>Bifurcata</taxon>
        <taxon>Unidentata</taxon>
        <taxon>Episquamata</taxon>
        <taxon>Toxicofera</taxon>
        <taxon>Serpentes</taxon>
        <taxon>Colubroidea</taxon>
        <taxon>Elapidae</taxon>
        <taxon>Elapinae</taxon>
        <taxon>Naja</taxon>
    </lineage>
</organism>
<comment type="catalytic activity">
    <reaction>
        <text>a primary alcohol + NAD(+) = an aldehyde + NADH + H(+)</text>
        <dbReference type="Rhea" id="RHEA:10736"/>
        <dbReference type="ChEBI" id="CHEBI:15378"/>
        <dbReference type="ChEBI" id="CHEBI:15734"/>
        <dbReference type="ChEBI" id="CHEBI:17478"/>
        <dbReference type="ChEBI" id="CHEBI:57540"/>
        <dbReference type="ChEBI" id="CHEBI:57945"/>
        <dbReference type="EC" id="1.1.1.1"/>
    </reaction>
</comment>
<comment type="catalytic activity">
    <reaction>
        <text>a secondary alcohol + NAD(+) = a ketone + NADH + H(+)</text>
        <dbReference type="Rhea" id="RHEA:10740"/>
        <dbReference type="ChEBI" id="CHEBI:15378"/>
        <dbReference type="ChEBI" id="CHEBI:17087"/>
        <dbReference type="ChEBI" id="CHEBI:35681"/>
        <dbReference type="ChEBI" id="CHEBI:57540"/>
        <dbReference type="ChEBI" id="CHEBI:57945"/>
        <dbReference type="EC" id="1.1.1.1"/>
    </reaction>
</comment>
<comment type="cofactor">
    <cofactor evidence="1">
        <name>Zn(2+)</name>
        <dbReference type="ChEBI" id="CHEBI:29105"/>
    </cofactor>
    <text evidence="1">Binds 2 Zn(2+) ions per subunit.</text>
</comment>
<comment type="subunit">
    <text>Homodimer.</text>
</comment>
<comment type="subcellular location">
    <subcellularLocation>
        <location>Cytoplasm</location>
    </subcellularLocation>
</comment>
<comment type="similarity">
    <text evidence="3">Belongs to the zinc-containing alcohol dehydrogenase family. Class-I subfamily.</text>
</comment>
<sequence length="375" mass="39955">STAGKVIKCKAAIAWELNKPLSIEQIEVAPPKAHEVRIKILATGVCRSDEHVISGAFRMPLPMVLGHEAAGVVESVGEGVTCVKPGDKVIPLFAPQCGKCRACQSPKGNLCTSNDLNSGSGLMPDGTSRFTCKGKSIHHFISTSTFTEYTVVHENSVVKIDPSAPLEKVCLIGCGFSTGYGAAMQTAKVEPGSICAVFGLGGVGLSVVMGCKAAGASRIIGVDINKDKFAKAKEMGATECINPLDFKKPINEVLFDLTGGEGVDYSFEVIGRTETMISAFTSCHQNLGTSVVVGVPPNASMITYNPLMLFTGRTWKGCVFGGWKSKDSVPKLVSDFMQKKFVLDPLITHTLPFEKINEGFDLLRSGKSIRTVLIF</sequence>
<evidence type="ECO:0000250" key="1"/>
<evidence type="ECO:0000269" key="2">
    <source>
    </source>
</evidence>
<evidence type="ECO:0000305" key="3"/>